<proteinExistence type="inferred from homology"/>
<dbReference type="EC" id="3.1.21.10" evidence="1"/>
<dbReference type="EMBL" id="CP000143">
    <property type="protein sequence ID" value="ABA79729.1"/>
    <property type="molecule type" value="Genomic_DNA"/>
</dbReference>
<dbReference type="RefSeq" id="WP_002720722.1">
    <property type="nucleotide sequence ID" value="NZ_CP030271.1"/>
</dbReference>
<dbReference type="RefSeq" id="YP_353630.1">
    <property type="nucleotide sequence ID" value="NC_007493.2"/>
</dbReference>
<dbReference type="SMR" id="Q3J0F5"/>
<dbReference type="STRING" id="272943.RSP_0556"/>
<dbReference type="EnsemblBacteria" id="ABA79729">
    <property type="protein sequence ID" value="ABA79729"/>
    <property type="gene ID" value="RSP_0556"/>
</dbReference>
<dbReference type="GeneID" id="67447290"/>
<dbReference type="KEGG" id="rsp:RSP_0556"/>
<dbReference type="PATRIC" id="fig|272943.9.peg.2507"/>
<dbReference type="eggNOG" id="COG0817">
    <property type="taxonomic scope" value="Bacteria"/>
</dbReference>
<dbReference type="OrthoDB" id="9805499at2"/>
<dbReference type="PhylomeDB" id="Q3J0F5"/>
<dbReference type="Proteomes" id="UP000002703">
    <property type="component" value="Chromosome 1"/>
</dbReference>
<dbReference type="GO" id="GO:0005737">
    <property type="term" value="C:cytoplasm"/>
    <property type="evidence" value="ECO:0007669"/>
    <property type="project" value="UniProtKB-SubCell"/>
</dbReference>
<dbReference type="GO" id="GO:0048476">
    <property type="term" value="C:Holliday junction resolvase complex"/>
    <property type="evidence" value="ECO:0007669"/>
    <property type="project" value="UniProtKB-UniRule"/>
</dbReference>
<dbReference type="GO" id="GO:0008821">
    <property type="term" value="F:crossover junction DNA endonuclease activity"/>
    <property type="evidence" value="ECO:0007669"/>
    <property type="project" value="UniProtKB-UniRule"/>
</dbReference>
<dbReference type="GO" id="GO:0003677">
    <property type="term" value="F:DNA binding"/>
    <property type="evidence" value="ECO:0007669"/>
    <property type="project" value="UniProtKB-KW"/>
</dbReference>
<dbReference type="GO" id="GO:0000287">
    <property type="term" value="F:magnesium ion binding"/>
    <property type="evidence" value="ECO:0007669"/>
    <property type="project" value="UniProtKB-UniRule"/>
</dbReference>
<dbReference type="GO" id="GO:0006310">
    <property type="term" value="P:DNA recombination"/>
    <property type="evidence" value="ECO:0007669"/>
    <property type="project" value="UniProtKB-UniRule"/>
</dbReference>
<dbReference type="GO" id="GO:0006281">
    <property type="term" value="P:DNA repair"/>
    <property type="evidence" value="ECO:0007669"/>
    <property type="project" value="UniProtKB-UniRule"/>
</dbReference>
<dbReference type="CDD" id="cd16962">
    <property type="entry name" value="RuvC"/>
    <property type="match status" value="1"/>
</dbReference>
<dbReference type="FunFam" id="3.30.420.10:FF:000002">
    <property type="entry name" value="Crossover junction endodeoxyribonuclease RuvC"/>
    <property type="match status" value="1"/>
</dbReference>
<dbReference type="Gene3D" id="3.30.420.10">
    <property type="entry name" value="Ribonuclease H-like superfamily/Ribonuclease H"/>
    <property type="match status" value="1"/>
</dbReference>
<dbReference type="HAMAP" id="MF_00034">
    <property type="entry name" value="RuvC"/>
    <property type="match status" value="1"/>
</dbReference>
<dbReference type="InterPro" id="IPR012337">
    <property type="entry name" value="RNaseH-like_sf"/>
</dbReference>
<dbReference type="InterPro" id="IPR036397">
    <property type="entry name" value="RNaseH_sf"/>
</dbReference>
<dbReference type="InterPro" id="IPR020563">
    <property type="entry name" value="X-over_junc_endoDNase_Mg_BS"/>
</dbReference>
<dbReference type="InterPro" id="IPR002176">
    <property type="entry name" value="X-over_junc_endoDNase_RuvC"/>
</dbReference>
<dbReference type="NCBIfam" id="TIGR00228">
    <property type="entry name" value="ruvC"/>
    <property type="match status" value="1"/>
</dbReference>
<dbReference type="PANTHER" id="PTHR30194">
    <property type="entry name" value="CROSSOVER JUNCTION ENDODEOXYRIBONUCLEASE RUVC"/>
    <property type="match status" value="1"/>
</dbReference>
<dbReference type="PANTHER" id="PTHR30194:SF3">
    <property type="entry name" value="CROSSOVER JUNCTION ENDODEOXYRIBONUCLEASE RUVC"/>
    <property type="match status" value="1"/>
</dbReference>
<dbReference type="Pfam" id="PF02075">
    <property type="entry name" value="RuvC"/>
    <property type="match status" value="1"/>
</dbReference>
<dbReference type="PRINTS" id="PR00696">
    <property type="entry name" value="RSOLVASERUVC"/>
</dbReference>
<dbReference type="SUPFAM" id="SSF53098">
    <property type="entry name" value="Ribonuclease H-like"/>
    <property type="match status" value="1"/>
</dbReference>
<dbReference type="PROSITE" id="PS01321">
    <property type="entry name" value="RUVC"/>
    <property type="match status" value="1"/>
</dbReference>
<reference key="1">
    <citation type="submission" date="2005-09" db="EMBL/GenBank/DDBJ databases">
        <title>Complete sequence of chromosome 1 of Rhodobacter sphaeroides 2.4.1.</title>
        <authorList>
            <person name="Copeland A."/>
            <person name="Lucas S."/>
            <person name="Lapidus A."/>
            <person name="Barry K."/>
            <person name="Detter J.C."/>
            <person name="Glavina T."/>
            <person name="Hammon N."/>
            <person name="Israni S."/>
            <person name="Pitluck S."/>
            <person name="Richardson P."/>
            <person name="Mackenzie C."/>
            <person name="Choudhary M."/>
            <person name="Larimer F."/>
            <person name="Hauser L.J."/>
            <person name="Land M."/>
            <person name="Donohue T.J."/>
            <person name="Kaplan S."/>
        </authorList>
    </citation>
    <scope>NUCLEOTIDE SEQUENCE [LARGE SCALE GENOMIC DNA]</scope>
    <source>
        <strain>ATCC 17023 / DSM 158 / JCM 6121 / CCUG 31486 / LMG 2827 / NBRC 12203 / NCIMB 8253 / ATH 2.4.1.</strain>
    </source>
</reference>
<gene>
    <name evidence="1" type="primary">ruvC</name>
    <name type="ordered locus">RHOS4_21610</name>
    <name type="ordered locus">RSP_0556</name>
</gene>
<accession>Q3J0F5</accession>
<organism>
    <name type="scientific">Cereibacter sphaeroides (strain ATCC 17023 / DSM 158 / JCM 6121 / CCUG 31486 / LMG 2827 / NBRC 12203 / NCIMB 8253 / ATH 2.4.1.)</name>
    <name type="common">Rhodobacter sphaeroides</name>
    <dbReference type="NCBI Taxonomy" id="272943"/>
    <lineage>
        <taxon>Bacteria</taxon>
        <taxon>Pseudomonadati</taxon>
        <taxon>Pseudomonadota</taxon>
        <taxon>Alphaproteobacteria</taxon>
        <taxon>Rhodobacterales</taxon>
        <taxon>Paracoccaceae</taxon>
        <taxon>Cereibacter</taxon>
    </lineage>
</organism>
<keyword id="KW-0963">Cytoplasm</keyword>
<keyword id="KW-0227">DNA damage</keyword>
<keyword id="KW-0233">DNA recombination</keyword>
<keyword id="KW-0234">DNA repair</keyword>
<keyword id="KW-0238">DNA-binding</keyword>
<keyword id="KW-0255">Endonuclease</keyword>
<keyword id="KW-0378">Hydrolase</keyword>
<keyword id="KW-0460">Magnesium</keyword>
<keyword id="KW-0479">Metal-binding</keyword>
<keyword id="KW-0540">Nuclease</keyword>
<keyword id="KW-1185">Reference proteome</keyword>
<name>RUVC_CERS4</name>
<protein>
    <recommendedName>
        <fullName evidence="1">Crossover junction endodeoxyribonuclease RuvC</fullName>
        <ecNumber evidence="1">3.1.21.10</ecNumber>
    </recommendedName>
    <alternativeName>
        <fullName evidence="1">Holliday junction nuclease RuvC</fullName>
    </alternativeName>
    <alternativeName>
        <fullName evidence="1">Holliday junction resolvase RuvC</fullName>
    </alternativeName>
</protein>
<feature type="chain" id="PRO_0000225170" description="Crossover junction endodeoxyribonuclease RuvC">
    <location>
        <begin position="1"/>
        <end position="168"/>
    </location>
</feature>
<feature type="active site" evidence="1">
    <location>
        <position position="7"/>
    </location>
</feature>
<feature type="active site" evidence="1">
    <location>
        <position position="66"/>
    </location>
</feature>
<feature type="active site" evidence="1">
    <location>
        <position position="138"/>
    </location>
</feature>
<feature type="binding site" evidence="1">
    <location>
        <position position="7"/>
    </location>
    <ligand>
        <name>Mg(2+)</name>
        <dbReference type="ChEBI" id="CHEBI:18420"/>
        <label>1</label>
    </ligand>
</feature>
<feature type="binding site" evidence="1">
    <location>
        <position position="66"/>
    </location>
    <ligand>
        <name>Mg(2+)</name>
        <dbReference type="ChEBI" id="CHEBI:18420"/>
        <label>2</label>
    </ligand>
</feature>
<feature type="binding site" evidence="1">
    <location>
        <position position="138"/>
    </location>
    <ligand>
        <name>Mg(2+)</name>
        <dbReference type="ChEBI" id="CHEBI:18420"/>
        <label>1</label>
    </ligand>
</feature>
<comment type="function">
    <text evidence="1">The RuvA-RuvB-RuvC complex processes Holliday junction (HJ) DNA during genetic recombination and DNA repair. Endonuclease that resolves HJ intermediates. Cleaves cruciform DNA by making single-stranded nicks across the HJ at symmetrical positions within the homologous arms, yielding a 5'-phosphate and a 3'-hydroxyl group; requires a central core of homology in the junction. The consensus cleavage sequence is 5'-(A/T)TT(C/G)-3'. Cleavage occurs on the 3'-side of the TT dinucleotide at the point of strand exchange. HJ branch migration catalyzed by RuvA-RuvB allows RuvC to scan DNA until it finds its consensus sequence, where it cleaves and resolves the cruciform DNA.</text>
</comment>
<comment type="catalytic activity">
    <reaction evidence="1">
        <text>Endonucleolytic cleavage at a junction such as a reciprocal single-stranded crossover between two homologous DNA duplexes (Holliday junction).</text>
        <dbReference type="EC" id="3.1.21.10"/>
    </reaction>
</comment>
<comment type="cofactor">
    <cofactor evidence="1">
        <name>Mg(2+)</name>
        <dbReference type="ChEBI" id="CHEBI:18420"/>
    </cofactor>
    <text evidence="1">Binds 2 Mg(2+) ion per subunit.</text>
</comment>
<comment type="subunit">
    <text evidence="1">Homodimer which binds Holliday junction (HJ) DNA. The HJ becomes 2-fold symmetrical on binding to RuvC with unstacked arms; it has a different conformation from HJ DNA in complex with RuvA. In the full resolvosome a probable DNA-RuvA(4)-RuvB(12)-RuvC(2) complex forms which resolves the HJ.</text>
</comment>
<comment type="subcellular location">
    <subcellularLocation>
        <location evidence="1">Cytoplasm</location>
    </subcellularLocation>
</comment>
<comment type="similarity">
    <text evidence="1">Belongs to the RuvC family.</text>
</comment>
<sequence>MRVLGIDPGLRNMGWGVIDVSGTRLAHVANGICHSDSGDLAHRLLSLHGQLTDVLARFQPDTAAVEHTFVNKDGVATLKLGQARGIALLVPAQAGLAVGEYAPNAVKKTVVGVGHAAKEQIQHMVRLHLPGVHLAGPDAADALAVAICHAHHVQSSGRLEAALARAAR</sequence>
<evidence type="ECO:0000255" key="1">
    <source>
        <dbReference type="HAMAP-Rule" id="MF_00034"/>
    </source>
</evidence>